<gene>
    <name evidence="1" type="primary">MAP2A</name>
    <name type="ordered locus">At2g44180</name>
    <name type="ORF">F6E13.31</name>
</gene>
<reference key="1">
    <citation type="journal article" date="2000" name="EMBO J.">
        <title>Identification of eukaryotic peptide deformylases reveals universality of N-terminal protein processing mechanisms.</title>
        <authorList>
            <person name="Giglione C."/>
            <person name="Serero A."/>
            <person name="Pierre M."/>
            <person name="Boisson B."/>
            <person name="Meinnel T."/>
        </authorList>
    </citation>
    <scope>NUCLEOTIDE SEQUENCE [MRNA]</scope>
    <scope>TISSUE SPECIFICITY</scope>
    <scope>SUBCELLULAR LOCATION</scope>
</reference>
<reference key="2">
    <citation type="journal article" date="1999" name="Nature">
        <title>Sequence and analysis of chromosome 2 of the plant Arabidopsis thaliana.</title>
        <authorList>
            <person name="Lin X."/>
            <person name="Kaul S."/>
            <person name="Rounsley S.D."/>
            <person name="Shea T.P."/>
            <person name="Benito M.-I."/>
            <person name="Town C.D."/>
            <person name="Fujii C.Y."/>
            <person name="Mason T.M."/>
            <person name="Bowman C.L."/>
            <person name="Barnstead M.E."/>
            <person name="Feldblyum T.V."/>
            <person name="Buell C.R."/>
            <person name="Ketchum K.A."/>
            <person name="Lee J.J."/>
            <person name="Ronning C.M."/>
            <person name="Koo H.L."/>
            <person name="Moffat K.S."/>
            <person name="Cronin L.A."/>
            <person name="Shen M."/>
            <person name="Pai G."/>
            <person name="Van Aken S."/>
            <person name="Umayam L."/>
            <person name="Tallon L.J."/>
            <person name="Gill J.E."/>
            <person name="Adams M.D."/>
            <person name="Carrera A.J."/>
            <person name="Creasy T.H."/>
            <person name="Goodman H.M."/>
            <person name="Somerville C.R."/>
            <person name="Copenhaver G.P."/>
            <person name="Preuss D."/>
            <person name="Nierman W.C."/>
            <person name="White O."/>
            <person name="Eisen J.A."/>
            <person name="Salzberg S.L."/>
            <person name="Fraser C.M."/>
            <person name="Venter J.C."/>
        </authorList>
    </citation>
    <scope>NUCLEOTIDE SEQUENCE [LARGE SCALE GENOMIC DNA]</scope>
    <source>
        <strain>cv. Columbia</strain>
    </source>
</reference>
<reference key="3">
    <citation type="journal article" date="2017" name="Plant J.">
        <title>Araport11: a complete reannotation of the Arabidopsis thaliana reference genome.</title>
        <authorList>
            <person name="Cheng C.Y."/>
            <person name="Krishnakumar V."/>
            <person name="Chan A.P."/>
            <person name="Thibaud-Nissen F."/>
            <person name="Schobel S."/>
            <person name="Town C.D."/>
        </authorList>
    </citation>
    <scope>GENOME REANNOTATION</scope>
    <source>
        <strain>cv. Columbia</strain>
    </source>
</reference>
<reference key="4">
    <citation type="journal article" date="2003" name="Science">
        <title>Empirical analysis of transcriptional activity in the Arabidopsis genome.</title>
        <authorList>
            <person name="Yamada K."/>
            <person name="Lim J."/>
            <person name="Dale J.M."/>
            <person name="Chen H."/>
            <person name="Shinn P."/>
            <person name="Palm C.J."/>
            <person name="Southwick A.M."/>
            <person name="Wu H.C."/>
            <person name="Kim C.J."/>
            <person name="Nguyen M."/>
            <person name="Pham P.K."/>
            <person name="Cheuk R.F."/>
            <person name="Karlin-Newmann G."/>
            <person name="Liu S.X."/>
            <person name="Lam B."/>
            <person name="Sakano H."/>
            <person name="Wu T."/>
            <person name="Yu G."/>
            <person name="Miranda M."/>
            <person name="Quach H.L."/>
            <person name="Tripp M."/>
            <person name="Chang C.H."/>
            <person name="Lee J.M."/>
            <person name="Toriumi M.J."/>
            <person name="Chan M.M."/>
            <person name="Tang C.C."/>
            <person name="Onodera C.S."/>
            <person name="Deng J.M."/>
            <person name="Akiyama K."/>
            <person name="Ansari Y."/>
            <person name="Arakawa T."/>
            <person name="Banh J."/>
            <person name="Banno F."/>
            <person name="Bowser L."/>
            <person name="Brooks S.Y."/>
            <person name="Carninci P."/>
            <person name="Chao Q."/>
            <person name="Choy N."/>
            <person name="Enju A."/>
            <person name="Goldsmith A.D."/>
            <person name="Gurjal M."/>
            <person name="Hansen N.F."/>
            <person name="Hayashizaki Y."/>
            <person name="Johnson-Hopson C."/>
            <person name="Hsuan V.W."/>
            <person name="Iida K."/>
            <person name="Karnes M."/>
            <person name="Khan S."/>
            <person name="Koesema E."/>
            <person name="Ishida J."/>
            <person name="Jiang P.X."/>
            <person name="Jones T."/>
            <person name="Kawai J."/>
            <person name="Kamiya A."/>
            <person name="Meyers C."/>
            <person name="Nakajima M."/>
            <person name="Narusaka M."/>
            <person name="Seki M."/>
            <person name="Sakurai T."/>
            <person name="Satou M."/>
            <person name="Tamse R."/>
            <person name="Vaysberg M."/>
            <person name="Wallender E.K."/>
            <person name="Wong C."/>
            <person name="Yamamura Y."/>
            <person name="Yuan S."/>
            <person name="Shinozaki K."/>
            <person name="Davis R.W."/>
            <person name="Theologis A."/>
            <person name="Ecker J.R."/>
        </authorList>
    </citation>
    <scope>NUCLEOTIDE SEQUENCE [LARGE SCALE MRNA]</scope>
    <source>
        <strain>cv. Columbia</strain>
    </source>
</reference>
<evidence type="ECO:0000255" key="1">
    <source>
        <dbReference type="HAMAP-Rule" id="MF_03175"/>
    </source>
</evidence>
<evidence type="ECO:0000256" key="2">
    <source>
        <dbReference type="SAM" id="MobiDB-lite"/>
    </source>
</evidence>
<evidence type="ECO:0000269" key="3">
    <source>
    </source>
</evidence>
<evidence type="ECO:0000305" key="4"/>
<sequence length="441" mass="49395">MAIGNPEVATMGKENTEAESSNGNESQLSSDLTKSLDLAEVKEDEKDNNQEEEDGLKAEASTKKKKKKSKSKKKKSSLQQTDPPSIPVLELFPSGDFPQGEIQQYNDDNLWRTTSEEKREMERLQKPIYNSLRQAAEVHRQVRKYMRSILKPGMLMIDLCETLENTVRKLISENGLQAGIAFPTGCSLNNVAAHWTPNSGDKTVLQYDDVMKLDFGTHIDGHIVDSAFTVAFNPMFDPLLAASRDATYTGIKEAGVDVRLCDVGAAVQEVMESYEVEINGKVYQVKSIRNLNGHSIGRYQIHAEKSVPNVRGGEQTKMEEGELYAIETFGSTGKGYVREDLECSHYMKNYDVGHVPLRLPRAKQLLATINKNFSTLAFCRRYLDRLGETKYLMALKNLCDSGIIEPCPPVCDVKGSYISQFEHTILLRPTCKEIISKGDDY</sequence>
<name>MAP21_ARATH</name>
<protein>
    <recommendedName>
        <fullName evidence="1">Methionine aminopeptidase 2A</fullName>
        <shortName evidence="1">MAP 2A</shortName>
        <shortName evidence="1">MetAP 2A</shortName>
        <ecNumber evidence="1">3.4.11.18</ecNumber>
    </recommendedName>
    <alternativeName>
        <fullName evidence="1">Peptidase M</fullName>
    </alternativeName>
</protein>
<organism>
    <name type="scientific">Arabidopsis thaliana</name>
    <name type="common">Mouse-ear cress</name>
    <dbReference type="NCBI Taxonomy" id="3702"/>
    <lineage>
        <taxon>Eukaryota</taxon>
        <taxon>Viridiplantae</taxon>
        <taxon>Streptophyta</taxon>
        <taxon>Embryophyta</taxon>
        <taxon>Tracheophyta</taxon>
        <taxon>Spermatophyta</taxon>
        <taxon>Magnoliopsida</taxon>
        <taxon>eudicotyledons</taxon>
        <taxon>Gunneridae</taxon>
        <taxon>Pentapetalae</taxon>
        <taxon>rosids</taxon>
        <taxon>malvids</taxon>
        <taxon>Brassicales</taxon>
        <taxon>Brassicaceae</taxon>
        <taxon>Camelineae</taxon>
        <taxon>Arabidopsis</taxon>
    </lineage>
</organism>
<dbReference type="EC" id="3.4.11.18" evidence="1"/>
<dbReference type="EMBL" id="AF250964">
    <property type="protein sequence ID" value="AAG33978.1"/>
    <property type="molecule type" value="mRNA"/>
</dbReference>
<dbReference type="EMBL" id="AC004005">
    <property type="protein sequence ID" value="AAC23422.2"/>
    <property type="molecule type" value="Genomic_DNA"/>
</dbReference>
<dbReference type="EMBL" id="CP002685">
    <property type="protein sequence ID" value="AEC10386.1"/>
    <property type="molecule type" value="Genomic_DNA"/>
</dbReference>
<dbReference type="EMBL" id="BT006476">
    <property type="protein sequence ID" value="AAP21284.1"/>
    <property type="molecule type" value="mRNA"/>
</dbReference>
<dbReference type="PIR" id="T00698">
    <property type="entry name" value="T00698"/>
</dbReference>
<dbReference type="RefSeq" id="NP_566013.1">
    <property type="nucleotide sequence ID" value="NM_129981.5"/>
</dbReference>
<dbReference type="SMR" id="Q9FV49"/>
<dbReference type="FunCoup" id="Q9FV49">
    <property type="interactions" value="3928"/>
</dbReference>
<dbReference type="STRING" id="3702.Q9FV49"/>
<dbReference type="MEROPS" id="M24.A02"/>
<dbReference type="iPTMnet" id="Q9FV49"/>
<dbReference type="PaxDb" id="3702-AT2G44180.1"/>
<dbReference type="ProteomicsDB" id="238868"/>
<dbReference type="EnsemblPlants" id="AT2G44180.1">
    <property type="protein sequence ID" value="AT2G44180.1"/>
    <property type="gene ID" value="AT2G44180"/>
</dbReference>
<dbReference type="GeneID" id="819025"/>
<dbReference type="Gramene" id="AT2G44180.1">
    <property type="protein sequence ID" value="AT2G44180.1"/>
    <property type="gene ID" value="AT2G44180"/>
</dbReference>
<dbReference type="KEGG" id="ath:AT2G44180"/>
<dbReference type="Araport" id="AT2G44180"/>
<dbReference type="TAIR" id="AT2G44180">
    <property type="gene designation" value="MAP2A"/>
</dbReference>
<dbReference type="eggNOG" id="KOG2775">
    <property type="taxonomic scope" value="Eukaryota"/>
</dbReference>
<dbReference type="HOGENOM" id="CLU_015857_7_1_1"/>
<dbReference type="InParanoid" id="Q9FV49"/>
<dbReference type="PhylomeDB" id="Q9FV49"/>
<dbReference type="PRO" id="PR:Q9FV49"/>
<dbReference type="Proteomes" id="UP000006548">
    <property type="component" value="Chromosome 2"/>
</dbReference>
<dbReference type="ExpressionAtlas" id="Q9FV49">
    <property type="expression patterns" value="baseline and differential"/>
</dbReference>
<dbReference type="GO" id="GO:0005737">
    <property type="term" value="C:cytoplasm"/>
    <property type="evidence" value="ECO:0000314"/>
    <property type="project" value="TAIR"/>
</dbReference>
<dbReference type="GO" id="GO:0004239">
    <property type="term" value="F:initiator methionyl aminopeptidase activity"/>
    <property type="evidence" value="ECO:0007669"/>
    <property type="project" value="UniProtKB-UniRule"/>
</dbReference>
<dbReference type="GO" id="GO:0046872">
    <property type="term" value="F:metal ion binding"/>
    <property type="evidence" value="ECO:0007669"/>
    <property type="project" value="UniProtKB-UniRule"/>
</dbReference>
<dbReference type="GO" id="GO:0070006">
    <property type="term" value="F:metalloaminopeptidase activity"/>
    <property type="evidence" value="ECO:0007669"/>
    <property type="project" value="UniProtKB-UniRule"/>
</dbReference>
<dbReference type="GO" id="GO:0031365">
    <property type="term" value="P:N-terminal protein amino acid modification"/>
    <property type="evidence" value="ECO:0000304"/>
    <property type="project" value="TAIR"/>
</dbReference>
<dbReference type="GO" id="GO:0006508">
    <property type="term" value="P:proteolysis"/>
    <property type="evidence" value="ECO:0007669"/>
    <property type="project" value="UniProtKB-KW"/>
</dbReference>
<dbReference type="CDD" id="cd01088">
    <property type="entry name" value="MetAP2"/>
    <property type="match status" value="1"/>
</dbReference>
<dbReference type="FunFam" id="1.10.10.10:FF:000106">
    <property type="entry name" value="Methionine aminopeptidase 2"/>
    <property type="match status" value="1"/>
</dbReference>
<dbReference type="FunFam" id="3.90.230.10:FF:000003">
    <property type="entry name" value="Methionine aminopeptidase 2"/>
    <property type="match status" value="1"/>
</dbReference>
<dbReference type="Gene3D" id="3.90.230.10">
    <property type="entry name" value="Creatinase/methionine aminopeptidase superfamily"/>
    <property type="match status" value="1"/>
</dbReference>
<dbReference type="Gene3D" id="1.10.10.10">
    <property type="entry name" value="Winged helix-like DNA-binding domain superfamily/Winged helix DNA-binding domain"/>
    <property type="match status" value="1"/>
</dbReference>
<dbReference type="HAMAP" id="MF_03175">
    <property type="entry name" value="MetAP_2_euk"/>
    <property type="match status" value="1"/>
</dbReference>
<dbReference type="InterPro" id="IPR036005">
    <property type="entry name" value="Creatinase/aminopeptidase-like"/>
</dbReference>
<dbReference type="InterPro" id="IPR050247">
    <property type="entry name" value="Met_Aminopeptidase_Type2"/>
</dbReference>
<dbReference type="InterPro" id="IPR000994">
    <property type="entry name" value="Pept_M24"/>
</dbReference>
<dbReference type="InterPro" id="IPR001714">
    <property type="entry name" value="Pept_M24_MAP"/>
</dbReference>
<dbReference type="InterPro" id="IPR002468">
    <property type="entry name" value="Pept_M24A_MAP2"/>
</dbReference>
<dbReference type="InterPro" id="IPR018349">
    <property type="entry name" value="Pept_M24A_MAP2_BS"/>
</dbReference>
<dbReference type="InterPro" id="IPR036388">
    <property type="entry name" value="WH-like_DNA-bd_sf"/>
</dbReference>
<dbReference type="InterPro" id="IPR036390">
    <property type="entry name" value="WH_DNA-bd_sf"/>
</dbReference>
<dbReference type="NCBIfam" id="TIGR00501">
    <property type="entry name" value="met_pdase_II"/>
    <property type="match status" value="1"/>
</dbReference>
<dbReference type="PANTHER" id="PTHR45777">
    <property type="entry name" value="METHIONINE AMINOPEPTIDASE 2"/>
    <property type="match status" value="1"/>
</dbReference>
<dbReference type="PANTHER" id="PTHR45777:SF3">
    <property type="entry name" value="METHIONINE AMINOPEPTIDASE 2A"/>
    <property type="match status" value="1"/>
</dbReference>
<dbReference type="Pfam" id="PF00557">
    <property type="entry name" value="Peptidase_M24"/>
    <property type="match status" value="1"/>
</dbReference>
<dbReference type="PRINTS" id="PR00599">
    <property type="entry name" value="MAPEPTIDASE"/>
</dbReference>
<dbReference type="SUPFAM" id="SSF55920">
    <property type="entry name" value="Creatinase/aminopeptidase"/>
    <property type="match status" value="1"/>
</dbReference>
<dbReference type="SUPFAM" id="SSF46785">
    <property type="entry name" value="Winged helix' DNA-binding domain"/>
    <property type="match status" value="1"/>
</dbReference>
<dbReference type="PROSITE" id="PS01202">
    <property type="entry name" value="MAP_2"/>
    <property type="match status" value="1"/>
</dbReference>
<feature type="chain" id="PRO_0000148970" description="Methionine aminopeptidase 2A">
    <location>
        <begin position="1"/>
        <end position="441"/>
    </location>
</feature>
<feature type="region of interest" description="Disordered" evidence="2">
    <location>
        <begin position="1"/>
        <end position="103"/>
    </location>
</feature>
<feature type="compositionally biased region" description="Polar residues" evidence="2">
    <location>
        <begin position="18"/>
        <end position="33"/>
    </location>
</feature>
<feature type="compositionally biased region" description="Basic and acidic residues" evidence="2">
    <location>
        <begin position="37"/>
        <end position="62"/>
    </location>
</feature>
<feature type="compositionally biased region" description="Basic residues" evidence="2">
    <location>
        <begin position="63"/>
        <end position="76"/>
    </location>
</feature>
<feature type="binding site" evidence="1">
    <location>
        <position position="194"/>
    </location>
    <ligand>
        <name>substrate</name>
    </ligand>
</feature>
<feature type="binding site" evidence="1">
    <location>
        <position position="214"/>
    </location>
    <ligand>
        <name>a divalent metal cation</name>
        <dbReference type="ChEBI" id="CHEBI:60240"/>
        <label>1</label>
    </ligand>
</feature>
<feature type="binding site" evidence="1">
    <location>
        <position position="225"/>
    </location>
    <ligand>
        <name>a divalent metal cation</name>
        <dbReference type="ChEBI" id="CHEBI:60240"/>
        <label>1</label>
    </ligand>
</feature>
<feature type="binding site" evidence="1">
    <location>
        <position position="225"/>
    </location>
    <ligand>
        <name>a divalent metal cation</name>
        <dbReference type="ChEBI" id="CHEBI:60240"/>
        <label>2</label>
        <note>catalytic</note>
    </ligand>
</feature>
<feature type="binding site" evidence="1">
    <location>
        <position position="294"/>
    </location>
    <ligand>
        <name>a divalent metal cation</name>
        <dbReference type="ChEBI" id="CHEBI:60240"/>
        <label>2</label>
        <note>catalytic</note>
    </ligand>
</feature>
<feature type="binding site" evidence="1">
    <location>
        <position position="302"/>
    </location>
    <ligand>
        <name>substrate</name>
    </ligand>
</feature>
<feature type="binding site" evidence="1">
    <location>
        <position position="327"/>
    </location>
    <ligand>
        <name>a divalent metal cation</name>
        <dbReference type="ChEBI" id="CHEBI:60240"/>
        <label>2</label>
        <note>catalytic</note>
    </ligand>
</feature>
<feature type="binding site" evidence="1">
    <location>
        <position position="422"/>
    </location>
    <ligand>
        <name>a divalent metal cation</name>
        <dbReference type="ChEBI" id="CHEBI:60240"/>
        <label>1</label>
    </ligand>
</feature>
<feature type="binding site" evidence="1">
    <location>
        <position position="422"/>
    </location>
    <ligand>
        <name>a divalent metal cation</name>
        <dbReference type="ChEBI" id="CHEBI:60240"/>
        <label>2</label>
        <note>catalytic</note>
    </ligand>
</feature>
<feature type="sequence conflict" description="In Ref. 1; AAG33978." evidence="4" ref="1">
    <original>G</original>
    <variation>E</variation>
    <location>
        <position position="12"/>
    </location>
</feature>
<feature type="sequence conflict" description="In Ref. 1; AAG33978." evidence="4" ref="1">
    <location>
        <position position="51"/>
    </location>
</feature>
<accession>Q9FV49</accession>
<accession>O80587</accession>
<keyword id="KW-0031">Aminopeptidase</keyword>
<keyword id="KW-0963">Cytoplasm</keyword>
<keyword id="KW-0378">Hydrolase</keyword>
<keyword id="KW-0479">Metal-binding</keyword>
<keyword id="KW-0645">Protease</keyword>
<keyword id="KW-1185">Reference proteome</keyword>
<proteinExistence type="evidence at transcript level"/>
<comment type="function">
    <text evidence="1">Cotranslationally removes the N-terminal methionine from nascent proteins. The N-terminal methionine is often cleaved when the second residue in the primary sequence is small and uncharged (Met-Ala-, Cys, Gly, Pro, Ser, Thr, or Val).</text>
</comment>
<comment type="catalytic activity">
    <reaction evidence="1">
        <text>Release of N-terminal amino acids, preferentially methionine, from peptides and arylamides.</text>
        <dbReference type="EC" id="3.4.11.18"/>
    </reaction>
</comment>
<comment type="cofactor">
    <cofactor evidence="1">
        <name>Co(2+)</name>
        <dbReference type="ChEBI" id="CHEBI:48828"/>
    </cofactor>
    <cofactor evidence="1">
        <name>Zn(2+)</name>
        <dbReference type="ChEBI" id="CHEBI:29105"/>
    </cofactor>
    <cofactor evidence="1">
        <name>Mn(2+)</name>
        <dbReference type="ChEBI" id="CHEBI:29035"/>
    </cofactor>
    <cofactor evidence="1">
        <name>Fe(2+)</name>
        <dbReference type="ChEBI" id="CHEBI:29033"/>
    </cofactor>
    <text evidence="1">Binds 2 divalent metal cations per subunit. Has a high-affinity and a low affinity metal-binding site. The true nature of the physiological cofactor is under debate. The enzyme is active with cobalt, zinc, manganese or divalent iron ions. Most likely, methionine aminopeptidases function as mononuclear Fe(2+)-metalloproteases under physiological conditions, and the catalytically relevant metal-binding site has been assigned to the histidine-containing high-affinity site.</text>
</comment>
<comment type="subcellular location">
    <subcellularLocation>
        <location evidence="1 3">Cytoplasm</location>
    </subcellularLocation>
</comment>
<comment type="tissue specificity">
    <text evidence="3">Ubiquitous. Preferentially expressed in roots.</text>
</comment>
<comment type="similarity">
    <text evidence="1">Belongs to the peptidase M24A family. Methionine aminopeptidase eukaryotic type 2 subfamily.</text>
</comment>